<proteinExistence type="evidence at protein level"/>
<name>TXHN1_GRARO</name>
<protein>
    <recommendedName>
        <fullName evidence="9">Kappa-theraphotoxin-Gr1a</fullName>
        <shortName evidence="9">Kappa-TRTX-Gr1a</shortName>
    </recommendedName>
    <alternativeName>
        <fullName>Hanatoxin-1</fullName>
        <shortName>HaTx1</shortName>
    </alternativeName>
</protein>
<dbReference type="EMBL" id="AB200991">
    <property type="protein sequence ID" value="BAN13487.1"/>
    <property type="molecule type" value="mRNA"/>
</dbReference>
<dbReference type="PDB" id="1D1H">
    <property type="method" value="NMR"/>
    <property type="chains" value="A=51-85"/>
</dbReference>
<dbReference type="PDBsum" id="1D1H"/>
<dbReference type="SMR" id="P56852"/>
<dbReference type="TCDB" id="8.B.5.3.6">
    <property type="family name" value="the na(+)/k(+)/ca(2+) channel targeting tarantula huwentoxin (tht) family"/>
</dbReference>
<dbReference type="ArachnoServer" id="AS000342">
    <property type="toxin name" value="kappa-theraphotoxin-Gr1a"/>
</dbReference>
<dbReference type="ArachnoServer" id="AS002037">
    <property type="toxin name" value="kappa-theraphotoxin-Gr1e"/>
</dbReference>
<dbReference type="EvolutionaryTrace" id="P56852"/>
<dbReference type="GO" id="GO:0005576">
    <property type="term" value="C:extracellular region"/>
    <property type="evidence" value="ECO:0007669"/>
    <property type="project" value="UniProtKB-SubCell"/>
</dbReference>
<dbReference type="GO" id="GO:0005246">
    <property type="term" value="F:calcium channel regulator activity"/>
    <property type="evidence" value="ECO:0007669"/>
    <property type="project" value="UniProtKB-KW"/>
</dbReference>
<dbReference type="GO" id="GO:0008200">
    <property type="term" value="F:ion channel inhibitor activity"/>
    <property type="evidence" value="ECO:0007669"/>
    <property type="project" value="InterPro"/>
</dbReference>
<dbReference type="GO" id="GO:0015459">
    <property type="term" value="F:potassium channel regulator activity"/>
    <property type="evidence" value="ECO:0007669"/>
    <property type="project" value="UniProtKB-KW"/>
</dbReference>
<dbReference type="GO" id="GO:0090729">
    <property type="term" value="F:toxin activity"/>
    <property type="evidence" value="ECO:0007669"/>
    <property type="project" value="UniProtKB-KW"/>
</dbReference>
<dbReference type="InterPro" id="IPR011696">
    <property type="entry name" value="Huwentoxin-1"/>
</dbReference>
<dbReference type="Pfam" id="PF07740">
    <property type="entry name" value="Toxin_12"/>
    <property type="match status" value="1"/>
</dbReference>
<dbReference type="SUPFAM" id="SSF57059">
    <property type="entry name" value="omega toxin-like"/>
    <property type="match status" value="1"/>
</dbReference>
<accession>P56852</accession>
<accession>M5AYA3</accession>
<sequence length="85" mass="9528">MKTSVFAAILGLALFAVLCSGSELQEKDLKETLLSAIMETALEAQPEERECRYLFGGCKTTSDCCKHLGCKFRDKYCAWDFTFSK</sequence>
<organism>
    <name type="scientific">Grammostola rosea</name>
    <name type="common">Chilean rose tarantula</name>
    <name type="synonym">Grammostola spatulata</name>
    <dbReference type="NCBI Taxonomy" id="432528"/>
    <lineage>
        <taxon>Eukaryota</taxon>
        <taxon>Metazoa</taxon>
        <taxon>Ecdysozoa</taxon>
        <taxon>Arthropoda</taxon>
        <taxon>Chelicerata</taxon>
        <taxon>Arachnida</taxon>
        <taxon>Araneae</taxon>
        <taxon>Mygalomorphae</taxon>
        <taxon>Theraphosidae</taxon>
        <taxon>Grammostola</taxon>
    </lineage>
</organism>
<comment type="function">
    <text evidence="4 6 7 8">Inhibits Kv2.1/KCNB1 and Kv4.2/KCND2 voltage-gated potassium channels. Acts as a gating modifier by shifting channel openings to more depolarized voltages and acts via the occupancy of multiple binding sites on the channel. The toxin binding sites are situated on the S3-S4 extracellular linker of the channel. At least two hanatoxin molecules can occupy the Kv2.1/KCNB1 channel, and maybe more (three or four). Can also inhibit calcium channels (Cav2.1/CACNA1A). Needs to partition into the membrane in order to bind to the channel.</text>
</comment>
<comment type="subcellular location">
    <subcellularLocation>
        <location evidence="5">Secreted</location>
    </subcellularLocation>
</comment>
<comment type="tissue specificity">
    <text evidence="10">Expressed by the venom gland.</text>
</comment>
<comment type="domain">
    <text evidence="3">The presence of a 'disulfide through disulfide knot' structurally defines this protein as a knottin.</text>
</comment>
<comment type="similarity">
    <text evidence="9">Belongs to the neurotoxin 10 (Hwtx-1) family. 09 (HaTx) subfamily.</text>
</comment>
<evidence type="ECO:0000250" key="1"/>
<evidence type="ECO:0000255" key="2"/>
<evidence type="ECO:0000269" key="3">
    <source>
    </source>
</evidence>
<evidence type="ECO:0000269" key="4">
    <source>
    </source>
</evidence>
<evidence type="ECO:0000269" key="5">
    <source>
    </source>
</evidence>
<evidence type="ECO:0000269" key="6">
    <source>
    </source>
</evidence>
<evidence type="ECO:0000269" key="7">
    <source>
    </source>
</evidence>
<evidence type="ECO:0000269" key="8">
    <source>
    </source>
</evidence>
<evidence type="ECO:0000305" key="9"/>
<evidence type="ECO:0000305" key="10">
    <source>
    </source>
</evidence>
<evidence type="ECO:0007744" key="11">
    <source>
        <dbReference type="PDB" id="1D1H"/>
    </source>
</evidence>
<evidence type="ECO:0007829" key="12">
    <source>
        <dbReference type="PDB" id="1D1H"/>
    </source>
</evidence>
<feature type="signal peptide" evidence="2">
    <location>
        <begin position="1"/>
        <end position="21"/>
    </location>
</feature>
<feature type="propeptide" id="PRO_0000452535" evidence="10">
    <location>
        <begin position="22"/>
        <end position="49"/>
    </location>
</feature>
<feature type="peptide" id="PRO_0000045012" description="Kappa-theraphotoxin-Gr1a" evidence="5">
    <location>
        <begin position="50"/>
        <end position="84"/>
    </location>
</feature>
<feature type="region of interest" description="Involved in active face" evidence="1">
    <location>
        <begin position="53"/>
        <end position="55"/>
    </location>
</feature>
<feature type="site" description="May be involved in interaction with voltage sensor" evidence="1">
    <location>
        <position position="52"/>
    </location>
</feature>
<feature type="site" description="May be involved in interaction with voltage sensor" evidence="1">
    <location>
        <position position="71"/>
    </location>
</feature>
<feature type="site" description="Involved in active face" evidence="1">
    <location>
        <position position="79"/>
    </location>
</feature>
<feature type="disulfide bond" evidence="3 11">
    <location>
        <begin position="51"/>
        <end position="65"/>
    </location>
</feature>
<feature type="disulfide bond" evidence="3 11">
    <location>
        <begin position="58"/>
        <end position="70"/>
    </location>
</feature>
<feature type="disulfide bond" evidence="3 11">
    <location>
        <begin position="64"/>
        <end position="77"/>
    </location>
</feature>
<feature type="helix" evidence="12">
    <location>
        <begin position="61"/>
        <end position="63"/>
    </location>
</feature>
<feature type="strand" evidence="12">
    <location>
        <begin position="66"/>
        <end position="70"/>
    </location>
</feature>
<feature type="turn" evidence="12">
    <location>
        <begin position="72"/>
        <end position="74"/>
    </location>
</feature>
<feature type="strand" evidence="12">
    <location>
        <begin position="76"/>
        <end position="79"/>
    </location>
</feature>
<reference key="1">
    <citation type="submission" date="2005-01" db="EMBL/GenBank/DDBJ databases">
        <title>Grammostola spatulata venom gland cDNA.</title>
        <authorList>
            <person name="Kimura T."/>
            <person name="Kubo T."/>
        </authorList>
    </citation>
    <scope>NUCLEOTIDE SEQUENCE [MRNA]</scope>
    <source>
        <tissue>Venom gland</tissue>
    </source>
</reference>
<reference key="2">
    <citation type="journal article" date="1995" name="Neuron">
        <title>An inhibitor of the Kv2.1 potassium channel isolated from the venom of a Chilean tarantula.</title>
        <authorList>
            <person name="Swartz K.J."/>
            <person name="MacKinnon R."/>
        </authorList>
    </citation>
    <scope>PROTEIN SEQUENCE OF 51-85</scope>
    <scope>SUBCELLULAR LOCATION</scope>
    <source>
        <tissue>Venom</tissue>
    </source>
</reference>
<reference key="3">
    <citation type="journal article" date="1997" name="Neuron">
        <title>Hanatoxin modifies the gating of a voltage-dependent K+ channel through multiple binding sites.</title>
        <authorList>
            <person name="Swartz K.J."/>
            <person name="MacKinnon R."/>
        </authorList>
    </citation>
    <scope>FUNCTION</scope>
</reference>
<reference key="4">
    <citation type="journal article" date="1997" name="Neuron">
        <title>Mapping the receptor site for hanatoxin, a gating modifier of voltage-dependent K+ channels.</title>
        <authorList>
            <person name="Swartz K.J."/>
            <person name="MacKinnon R."/>
        </authorList>
    </citation>
    <scope>FUNCTION</scope>
</reference>
<reference key="5">
    <citation type="journal article" date="1998" name="Proc. Natl. Acad. Sci. U.S.A.">
        <title>Gating modifier toxins reveal a conserved structural motif in voltage-gated Ca2+ and K+ channels.</title>
        <authorList>
            <person name="Li-Smerin Y."/>
            <person name="Swartz K.J."/>
        </authorList>
    </citation>
    <scope>FUNCTION</scope>
</reference>
<reference key="6">
    <citation type="journal article" date="2005" name="Nature">
        <title>Voltage-sensor activation with a tarantula toxin as cargo.</title>
        <authorList>
            <person name="Phillips L.R."/>
            <person name="Milescu M."/>
            <person name="Li-Smerin Y."/>
            <person name="Mindell J.A."/>
            <person name="Kim J.I."/>
            <person name="Swartz K.J."/>
        </authorList>
    </citation>
    <scope>MEMBRANE-PARTITIONING</scope>
</reference>
<reference key="7">
    <citation type="journal article" date="2007" name="Toxicon">
        <title>Gating modifier peptides as probes of pancreatic beta-cell physiology.</title>
        <authorList>
            <person name="Herrington J."/>
        </authorList>
    </citation>
    <scope>FUNCTION ON PANCREATIC BETA-CELLS</scope>
</reference>
<reference key="8">
    <citation type="journal article" date="2000" name="J. Mol. Biol.">
        <title>Solution structure of hanatoxin1, a gating modifier of voltage-dependent K(+) channels: common surface features of gating modifier toxins.</title>
        <authorList>
            <person name="Takahashi H."/>
            <person name="Kim J.I."/>
            <person name="Min H.J."/>
            <person name="Sato K."/>
            <person name="Swartz K.J."/>
            <person name="Shimada I."/>
        </authorList>
    </citation>
    <scope>STRUCTURE BY NMR OF 51-85</scope>
    <scope>DISULFIDE BONDS</scope>
</reference>
<keyword id="KW-0002">3D-structure</keyword>
<keyword id="KW-0108">Calcium channel impairing toxin</keyword>
<keyword id="KW-0903">Direct protein sequencing</keyword>
<keyword id="KW-1015">Disulfide bond</keyword>
<keyword id="KW-0872">Ion channel impairing toxin</keyword>
<keyword id="KW-0960">Knottin</keyword>
<keyword id="KW-0528">Neurotoxin</keyword>
<keyword id="KW-0632">Potassium channel impairing toxin</keyword>
<keyword id="KW-0964">Secreted</keyword>
<keyword id="KW-0732">Signal</keyword>
<keyword id="KW-0800">Toxin</keyword>
<keyword id="KW-1218">Voltage-gated calcium channel impairing toxin</keyword>
<keyword id="KW-1220">Voltage-gated potassium channel impairing toxin</keyword>